<dbReference type="EC" id="5.4.2.10" evidence="1"/>
<dbReference type="EMBL" id="CP000110">
    <property type="protein sequence ID" value="ABB34053.1"/>
    <property type="molecule type" value="Genomic_DNA"/>
</dbReference>
<dbReference type="RefSeq" id="WP_011363305.1">
    <property type="nucleotide sequence ID" value="NC_007516.1"/>
</dbReference>
<dbReference type="SMR" id="Q3AMX9"/>
<dbReference type="STRING" id="110662.Syncc9605_0277"/>
<dbReference type="KEGG" id="syd:Syncc9605_0277"/>
<dbReference type="eggNOG" id="COG1109">
    <property type="taxonomic scope" value="Bacteria"/>
</dbReference>
<dbReference type="HOGENOM" id="CLU_016950_7_0_3"/>
<dbReference type="OrthoDB" id="9806956at2"/>
<dbReference type="GO" id="GO:0005829">
    <property type="term" value="C:cytosol"/>
    <property type="evidence" value="ECO:0007669"/>
    <property type="project" value="TreeGrafter"/>
</dbReference>
<dbReference type="GO" id="GO:0000287">
    <property type="term" value="F:magnesium ion binding"/>
    <property type="evidence" value="ECO:0007669"/>
    <property type="project" value="UniProtKB-UniRule"/>
</dbReference>
<dbReference type="GO" id="GO:0008966">
    <property type="term" value="F:phosphoglucosamine mutase activity"/>
    <property type="evidence" value="ECO:0007669"/>
    <property type="project" value="UniProtKB-UniRule"/>
</dbReference>
<dbReference type="GO" id="GO:0004615">
    <property type="term" value="F:phosphomannomutase activity"/>
    <property type="evidence" value="ECO:0007669"/>
    <property type="project" value="TreeGrafter"/>
</dbReference>
<dbReference type="GO" id="GO:0005975">
    <property type="term" value="P:carbohydrate metabolic process"/>
    <property type="evidence" value="ECO:0007669"/>
    <property type="project" value="InterPro"/>
</dbReference>
<dbReference type="GO" id="GO:0009252">
    <property type="term" value="P:peptidoglycan biosynthetic process"/>
    <property type="evidence" value="ECO:0007669"/>
    <property type="project" value="TreeGrafter"/>
</dbReference>
<dbReference type="GO" id="GO:0006048">
    <property type="term" value="P:UDP-N-acetylglucosamine biosynthetic process"/>
    <property type="evidence" value="ECO:0007669"/>
    <property type="project" value="TreeGrafter"/>
</dbReference>
<dbReference type="CDD" id="cd05802">
    <property type="entry name" value="GlmM"/>
    <property type="match status" value="1"/>
</dbReference>
<dbReference type="FunFam" id="3.30.310.50:FF:000001">
    <property type="entry name" value="Phosphoglucosamine mutase"/>
    <property type="match status" value="1"/>
</dbReference>
<dbReference type="FunFam" id="3.40.120.10:FF:000001">
    <property type="entry name" value="Phosphoglucosamine mutase"/>
    <property type="match status" value="1"/>
</dbReference>
<dbReference type="FunFam" id="3.40.120.10:FF:000002">
    <property type="entry name" value="Phosphoglucosamine mutase"/>
    <property type="match status" value="1"/>
</dbReference>
<dbReference type="Gene3D" id="3.40.120.10">
    <property type="entry name" value="Alpha-D-Glucose-1,6-Bisphosphate, subunit A, domain 3"/>
    <property type="match status" value="3"/>
</dbReference>
<dbReference type="Gene3D" id="3.30.310.50">
    <property type="entry name" value="Alpha-D-phosphohexomutase, C-terminal domain"/>
    <property type="match status" value="1"/>
</dbReference>
<dbReference type="HAMAP" id="MF_01554_B">
    <property type="entry name" value="GlmM_B"/>
    <property type="match status" value="1"/>
</dbReference>
<dbReference type="InterPro" id="IPR005844">
    <property type="entry name" value="A-D-PHexomutase_a/b/a-I"/>
</dbReference>
<dbReference type="InterPro" id="IPR016055">
    <property type="entry name" value="A-D-PHexomutase_a/b/a-I/II/III"/>
</dbReference>
<dbReference type="InterPro" id="IPR005845">
    <property type="entry name" value="A-D-PHexomutase_a/b/a-II"/>
</dbReference>
<dbReference type="InterPro" id="IPR005846">
    <property type="entry name" value="A-D-PHexomutase_a/b/a-III"/>
</dbReference>
<dbReference type="InterPro" id="IPR005843">
    <property type="entry name" value="A-D-PHexomutase_C"/>
</dbReference>
<dbReference type="InterPro" id="IPR036900">
    <property type="entry name" value="A-D-PHexomutase_C_sf"/>
</dbReference>
<dbReference type="InterPro" id="IPR016066">
    <property type="entry name" value="A-D-PHexomutase_CS"/>
</dbReference>
<dbReference type="InterPro" id="IPR005841">
    <property type="entry name" value="Alpha-D-phosphohexomutase_SF"/>
</dbReference>
<dbReference type="InterPro" id="IPR006352">
    <property type="entry name" value="GlmM_bact"/>
</dbReference>
<dbReference type="InterPro" id="IPR050060">
    <property type="entry name" value="Phosphoglucosamine_mutase"/>
</dbReference>
<dbReference type="NCBIfam" id="TIGR01455">
    <property type="entry name" value="glmM"/>
    <property type="match status" value="1"/>
</dbReference>
<dbReference type="PANTHER" id="PTHR42946:SF1">
    <property type="entry name" value="PHOSPHOGLUCOMUTASE (ALPHA-D-GLUCOSE-1,6-BISPHOSPHATE-DEPENDENT)"/>
    <property type="match status" value="1"/>
</dbReference>
<dbReference type="PANTHER" id="PTHR42946">
    <property type="entry name" value="PHOSPHOHEXOSE MUTASE"/>
    <property type="match status" value="1"/>
</dbReference>
<dbReference type="Pfam" id="PF02878">
    <property type="entry name" value="PGM_PMM_I"/>
    <property type="match status" value="1"/>
</dbReference>
<dbReference type="Pfam" id="PF02879">
    <property type="entry name" value="PGM_PMM_II"/>
    <property type="match status" value="1"/>
</dbReference>
<dbReference type="Pfam" id="PF02880">
    <property type="entry name" value="PGM_PMM_III"/>
    <property type="match status" value="1"/>
</dbReference>
<dbReference type="Pfam" id="PF00408">
    <property type="entry name" value="PGM_PMM_IV"/>
    <property type="match status" value="1"/>
</dbReference>
<dbReference type="PRINTS" id="PR00509">
    <property type="entry name" value="PGMPMM"/>
</dbReference>
<dbReference type="SUPFAM" id="SSF55957">
    <property type="entry name" value="Phosphoglucomutase, C-terminal domain"/>
    <property type="match status" value="1"/>
</dbReference>
<dbReference type="SUPFAM" id="SSF53738">
    <property type="entry name" value="Phosphoglucomutase, first 3 domains"/>
    <property type="match status" value="3"/>
</dbReference>
<dbReference type="PROSITE" id="PS00710">
    <property type="entry name" value="PGM_PMM"/>
    <property type="match status" value="1"/>
</dbReference>
<sequence length="464" mass="48563">MVQEACSPIGPALGDAAPGFGTDGIRGLAGTVLTPALCLQVGYWVGRVLQAEGPVLIGMDSRTSGSMVVAALTAGLTAAGRDVWTLGLCPTPAVPLLIRQLGVAGGLMVSASHNPPADNGIKVFGVDGAKLSASRQAQVEACLKGQTSMAEQGKFRCGVARPSADLLDRYREVLQESVAERRLDGVPIVLDLCWGSATACGADAFRALGADLTVLHGEPDGSRINVACGSTHLEPLQRAVIERGAAMGFAFDGDADRMLAVDGRGRIIDGDHVLFLWGSVLQEQQALPEQRLVATVMSNLGFERAWQQRGGTLERTPVGDQHVHAAMVASGAALGGEQSGHILSASHGLCGDGVLTAVQLATLCYAQGISLSDWLDRSFQAYPQKLVNVRVMDRARRKNWSACTALTDAIASAEQSMGENGRILVRASGTEPVLRVMVEAEQSDAVEHLTGHLAAVAEEHLNVA</sequence>
<reference key="1">
    <citation type="submission" date="2005-07" db="EMBL/GenBank/DDBJ databases">
        <title>Complete sequence of Synechococcus sp. CC9605.</title>
        <authorList>
            <consortium name="US DOE Joint Genome Institute"/>
            <person name="Copeland A."/>
            <person name="Lucas S."/>
            <person name="Lapidus A."/>
            <person name="Barry K."/>
            <person name="Detter J.C."/>
            <person name="Glavina T."/>
            <person name="Hammon N."/>
            <person name="Israni S."/>
            <person name="Pitluck S."/>
            <person name="Schmutz J."/>
            <person name="Martinez M."/>
            <person name="Larimer F."/>
            <person name="Land M."/>
            <person name="Kyrpides N."/>
            <person name="Ivanova N."/>
            <person name="Richardson P."/>
        </authorList>
    </citation>
    <scope>NUCLEOTIDE SEQUENCE [LARGE SCALE GENOMIC DNA]</scope>
    <source>
        <strain>CC9605</strain>
    </source>
</reference>
<accession>Q3AMX9</accession>
<name>GLMM_SYNSC</name>
<organism>
    <name type="scientific">Synechococcus sp. (strain CC9605)</name>
    <dbReference type="NCBI Taxonomy" id="110662"/>
    <lineage>
        <taxon>Bacteria</taxon>
        <taxon>Bacillati</taxon>
        <taxon>Cyanobacteriota</taxon>
        <taxon>Cyanophyceae</taxon>
        <taxon>Synechococcales</taxon>
        <taxon>Synechococcaceae</taxon>
        <taxon>Synechococcus</taxon>
    </lineage>
</organism>
<proteinExistence type="inferred from homology"/>
<gene>
    <name evidence="1" type="primary">glmM</name>
    <name type="ordered locus">Syncc9605_0277</name>
</gene>
<keyword id="KW-0413">Isomerase</keyword>
<keyword id="KW-0460">Magnesium</keyword>
<keyword id="KW-0479">Metal-binding</keyword>
<keyword id="KW-0597">Phosphoprotein</keyword>
<comment type="function">
    <text evidence="1">Catalyzes the conversion of glucosamine-6-phosphate to glucosamine-1-phosphate.</text>
</comment>
<comment type="catalytic activity">
    <reaction evidence="1">
        <text>alpha-D-glucosamine 1-phosphate = D-glucosamine 6-phosphate</text>
        <dbReference type="Rhea" id="RHEA:23424"/>
        <dbReference type="ChEBI" id="CHEBI:58516"/>
        <dbReference type="ChEBI" id="CHEBI:58725"/>
        <dbReference type="EC" id="5.4.2.10"/>
    </reaction>
</comment>
<comment type="cofactor">
    <cofactor evidence="1">
        <name>Mg(2+)</name>
        <dbReference type="ChEBI" id="CHEBI:18420"/>
    </cofactor>
    <text evidence="1">Binds 1 Mg(2+) ion per subunit.</text>
</comment>
<comment type="PTM">
    <text evidence="1">Activated by phosphorylation.</text>
</comment>
<comment type="similarity">
    <text evidence="1">Belongs to the phosphohexose mutase family.</text>
</comment>
<protein>
    <recommendedName>
        <fullName evidence="1">Phosphoglucosamine mutase</fullName>
        <ecNumber evidence="1">5.4.2.10</ecNumber>
    </recommendedName>
</protein>
<evidence type="ECO:0000255" key="1">
    <source>
        <dbReference type="HAMAP-Rule" id="MF_01554"/>
    </source>
</evidence>
<feature type="chain" id="PRO_0000301394" description="Phosphoglucosamine mutase">
    <location>
        <begin position="1"/>
        <end position="464"/>
    </location>
</feature>
<feature type="active site" description="Phosphoserine intermediate" evidence="1">
    <location>
        <position position="112"/>
    </location>
</feature>
<feature type="binding site" description="via phosphate group" evidence="1">
    <location>
        <position position="112"/>
    </location>
    <ligand>
        <name>Mg(2+)</name>
        <dbReference type="ChEBI" id="CHEBI:18420"/>
    </ligand>
</feature>
<feature type="binding site" evidence="1">
    <location>
        <position position="252"/>
    </location>
    <ligand>
        <name>Mg(2+)</name>
        <dbReference type="ChEBI" id="CHEBI:18420"/>
    </ligand>
</feature>
<feature type="binding site" evidence="1">
    <location>
        <position position="254"/>
    </location>
    <ligand>
        <name>Mg(2+)</name>
        <dbReference type="ChEBI" id="CHEBI:18420"/>
    </ligand>
</feature>
<feature type="binding site" evidence="1">
    <location>
        <position position="256"/>
    </location>
    <ligand>
        <name>Mg(2+)</name>
        <dbReference type="ChEBI" id="CHEBI:18420"/>
    </ligand>
</feature>
<feature type="modified residue" description="Phosphoserine" evidence="1">
    <location>
        <position position="112"/>
    </location>
</feature>